<organism>
    <name type="scientific">Arabidopsis thaliana</name>
    <name type="common">Mouse-ear cress</name>
    <dbReference type="NCBI Taxonomy" id="3702"/>
    <lineage>
        <taxon>Eukaryota</taxon>
        <taxon>Viridiplantae</taxon>
        <taxon>Streptophyta</taxon>
        <taxon>Embryophyta</taxon>
        <taxon>Tracheophyta</taxon>
        <taxon>Spermatophyta</taxon>
        <taxon>Magnoliopsida</taxon>
        <taxon>eudicotyledons</taxon>
        <taxon>Gunneridae</taxon>
        <taxon>Pentapetalae</taxon>
        <taxon>rosids</taxon>
        <taxon>malvids</taxon>
        <taxon>Brassicales</taxon>
        <taxon>Brassicaceae</taxon>
        <taxon>Camelineae</taxon>
        <taxon>Arabidopsis</taxon>
    </lineage>
</organism>
<comment type="function">
    <text evidence="1">Activates the ARF proteins by exchanging bound GDP for free GTP. Plays a role in vesicular protein sorting (By similarity).</text>
</comment>
<comment type="activity regulation">
    <text evidence="1">Inhibited by brefeldin A.</text>
</comment>
<comment type="subunit">
    <text evidence="1">Homodimer.</text>
</comment>
<comment type="subcellular location">
    <subcellularLocation>
        <location evidence="1">Cytoplasm</location>
        <location evidence="1">Cytosol</location>
    </subcellularLocation>
    <subcellularLocation>
        <location evidence="1">Membrane</location>
        <topology evidence="1">Peripheral membrane protein</topology>
        <orientation evidence="1">Cytoplasmic side</orientation>
    </subcellularLocation>
    <text evidence="1">Soluble and partially membrane-bound.</text>
</comment>
<comment type="sequence caution" evidence="4">
    <conflict type="erroneous gene model prediction">
        <sequence resource="EMBL-CDS" id="CAA18731"/>
    </conflict>
</comment>
<comment type="sequence caution" evidence="4">
    <conflict type="erroneous gene model prediction">
        <sequence resource="EMBL-CDS" id="CAB80255"/>
    </conflict>
</comment>
<dbReference type="EMBL" id="AL022604">
    <property type="protein sequence ID" value="CAA18731.1"/>
    <property type="status" value="ALT_SEQ"/>
    <property type="molecule type" value="Genomic_DNA"/>
</dbReference>
<dbReference type="EMBL" id="AL161587">
    <property type="protein sequence ID" value="CAB80255.1"/>
    <property type="status" value="ALT_SEQ"/>
    <property type="molecule type" value="Genomic_DNA"/>
</dbReference>
<dbReference type="EMBL" id="CP002687">
    <property type="protein sequence ID" value="AEE86505.1"/>
    <property type="molecule type" value="Genomic_DNA"/>
</dbReference>
<dbReference type="PIR" id="T06119">
    <property type="entry name" value="T06119"/>
</dbReference>
<dbReference type="RefSeq" id="NP_195264.2">
    <property type="nucleotide sequence ID" value="NM_119704.4"/>
</dbReference>
<dbReference type="SMR" id="F4JN05"/>
<dbReference type="FunCoup" id="F4JN05">
    <property type="interactions" value="3767"/>
</dbReference>
<dbReference type="STRING" id="3702.F4JN05"/>
<dbReference type="iPTMnet" id="F4JN05"/>
<dbReference type="PaxDb" id="3702-AT4G35380.1"/>
<dbReference type="ProteomicsDB" id="240628"/>
<dbReference type="EnsemblPlants" id="AT4G35380.1">
    <property type="protein sequence ID" value="AT4G35380.1"/>
    <property type="gene ID" value="AT4G35380"/>
</dbReference>
<dbReference type="GeneID" id="829691"/>
<dbReference type="Gramene" id="AT4G35380.1">
    <property type="protein sequence ID" value="AT4G35380.1"/>
    <property type="gene ID" value="AT4G35380"/>
</dbReference>
<dbReference type="KEGG" id="ath:AT4G35380"/>
<dbReference type="Araport" id="AT4G35380"/>
<dbReference type="TAIR" id="AT4G35380">
    <property type="gene designation" value="BIG4"/>
</dbReference>
<dbReference type="eggNOG" id="KOG0929">
    <property type="taxonomic scope" value="Eukaryota"/>
</dbReference>
<dbReference type="HOGENOM" id="CLU_000691_0_0_1"/>
<dbReference type="InParanoid" id="F4JN05"/>
<dbReference type="OMA" id="NNDDQIM"/>
<dbReference type="PRO" id="PR:F4JN05"/>
<dbReference type="Proteomes" id="UP000006548">
    <property type="component" value="Chromosome 4"/>
</dbReference>
<dbReference type="ExpressionAtlas" id="F4JN05">
    <property type="expression patterns" value="baseline and differential"/>
</dbReference>
<dbReference type="GO" id="GO:0005829">
    <property type="term" value="C:cytosol"/>
    <property type="evidence" value="ECO:0007669"/>
    <property type="project" value="UniProtKB-SubCell"/>
</dbReference>
<dbReference type="GO" id="GO:0032588">
    <property type="term" value="C:trans-Golgi network membrane"/>
    <property type="evidence" value="ECO:0000314"/>
    <property type="project" value="TAIR"/>
</dbReference>
<dbReference type="GO" id="GO:0005085">
    <property type="term" value="F:guanyl-nucleotide exchange factor activity"/>
    <property type="evidence" value="ECO:0007669"/>
    <property type="project" value="UniProtKB-KW"/>
</dbReference>
<dbReference type="GO" id="GO:0015031">
    <property type="term" value="P:protein transport"/>
    <property type="evidence" value="ECO:0007669"/>
    <property type="project" value="UniProtKB-KW"/>
</dbReference>
<dbReference type="GO" id="GO:0032012">
    <property type="term" value="P:regulation of ARF protein signal transduction"/>
    <property type="evidence" value="ECO:0007669"/>
    <property type="project" value="InterPro"/>
</dbReference>
<dbReference type="CDD" id="cd00171">
    <property type="entry name" value="Sec7"/>
    <property type="match status" value="1"/>
</dbReference>
<dbReference type="FunFam" id="1.10.1000.11:FF:000005">
    <property type="entry name" value="Brefeldin A-inhibited guanine nucleotide-exchange 1"/>
    <property type="match status" value="1"/>
</dbReference>
<dbReference type="FunFam" id="1.10.220.20:FF:000002">
    <property type="entry name" value="Brefeldin A-inhibited guanine nucleotide-exchange protein 1"/>
    <property type="match status" value="1"/>
</dbReference>
<dbReference type="Gene3D" id="1.10.220.20">
    <property type="match status" value="1"/>
</dbReference>
<dbReference type="Gene3D" id="1.10.1000.11">
    <property type="entry name" value="Arf Nucleotide-binding Site Opener,domain 2"/>
    <property type="match status" value="1"/>
</dbReference>
<dbReference type="InterPro" id="IPR016024">
    <property type="entry name" value="ARM-type_fold"/>
</dbReference>
<dbReference type="InterPro" id="IPR032629">
    <property type="entry name" value="DCB_dom"/>
</dbReference>
<dbReference type="InterPro" id="IPR015403">
    <property type="entry name" value="Mon2/Sec7/BIG1-like_HDS"/>
</dbReference>
<dbReference type="InterPro" id="IPR032691">
    <property type="entry name" value="Mon2/Sec7/BIG1-like_HUS"/>
</dbReference>
<dbReference type="InterPro" id="IPR032817">
    <property type="entry name" value="Mon2_C"/>
</dbReference>
<dbReference type="InterPro" id="IPR046455">
    <property type="entry name" value="Sec7/BIG1-like_C"/>
</dbReference>
<dbReference type="InterPro" id="IPR023394">
    <property type="entry name" value="Sec7_C_sf"/>
</dbReference>
<dbReference type="InterPro" id="IPR000904">
    <property type="entry name" value="Sec7_dom"/>
</dbReference>
<dbReference type="InterPro" id="IPR035999">
    <property type="entry name" value="Sec7_dom_sf"/>
</dbReference>
<dbReference type="PANTHER" id="PTHR10663:SF356">
    <property type="entry name" value="BREFELDIN A-INHIBITED GUANINE NUCLEOTIDE-EXCHANGE PROTEIN 4"/>
    <property type="match status" value="1"/>
</dbReference>
<dbReference type="PANTHER" id="PTHR10663">
    <property type="entry name" value="GUANYL-NUCLEOTIDE EXCHANGE FACTOR"/>
    <property type="match status" value="1"/>
</dbReference>
<dbReference type="Pfam" id="PF20252">
    <property type="entry name" value="BIG2_C"/>
    <property type="match status" value="1"/>
</dbReference>
<dbReference type="Pfam" id="PF16213">
    <property type="entry name" value="DCB"/>
    <property type="match status" value="1"/>
</dbReference>
<dbReference type="Pfam" id="PF16206">
    <property type="entry name" value="Mon2_C"/>
    <property type="match status" value="1"/>
</dbReference>
<dbReference type="Pfam" id="PF01369">
    <property type="entry name" value="Sec7"/>
    <property type="match status" value="1"/>
</dbReference>
<dbReference type="Pfam" id="PF09324">
    <property type="entry name" value="Sec7-like_HDS"/>
    <property type="match status" value="1"/>
</dbReference>
<dbReference type="Pfam" id="PF12783">
    <property type="entry name" value="Sec7-like_HUS"/>
    <property type="match status" value="1"/>
</dbReference>
<dbReference type="SMART" id="SM00222">
    <property type="entry name" value="Sec7"/>
    <property type="match status" value="1"/>
</dbReference>
<dbReference type="SUPFAM" id="SSF48371">
    <property type="entry name" value="ARM repeat"/>
    <property type="match status" value="2"/>
</dbReference>
<dbReference type="SUPFAM" id="SSF48425">
    <property type="entry name" value="Sec7 domain"/>
    <property type="match status" value="1"/>
</dbReference>
<dbReference type="PROSITE" id="PS50190">
    <property type="entry name" value="SEC7"/>
    <property type="match status" value="1"/>
</dbReference>
<gene>
    <name type="primary">BIG4</name>
    <name type="ordered locus">At4g35380</name>
    <name type="ORF">F23E12.60</name>
</gene>
<accession>F4JN05</accession>
<accession>O65490</accession>
<sequence>MSTSQTLGGATRCGRIIGPSLDKIIKNAAWRKHTYLVSSCKSVLDKLESLPDDFHDPSSVVSGLAASDADSVLQPFLLSLETAYSKVVEPSLDCAFKLFSLSILRGEIQSSKQDSILFKLVNAVSKVGAIAEEPIQLAVLRVLLAAVRSPCILIRGDCLLHVVKTCYNIYLGGLSGTTQICAKSVLAQMMLVIFTRSEEDSLDVSVKTIYVNELLTFTDKSVNEGSSVYFCQGFVNEVMAAGQGSPLPPPDVIQILLQNPETETVMTPDSPSFRGYVANGEGDSETGDMSKVRQDAFLLFKNLCKLSMRFSSKENNDDQIMVRGKTLSLELLKVIIDNGGSVWRTNESFINAVKQYLCLSLLKNSAVSIMSIFQLQCAIFMSLLSKLRSVLKAEIGIFFPMIVLRVLENVLQPSYLQKMTVLNLLDKMSQDPQLMVDIFVNYDCDVESSNILERIVNGLLKTALGPPTGSSTTLSPAQDSTFRNDSVKCLVNLAKAMGNWMDQQLKVNETVWPKGSQVYASMDSNASQISELEGTISDCDSQPDTSNPEAYDASMLEQRRAYKIELQKGISLFNRKPSKGVEFLISTKKIGSSPEEVASFLMKTAGLNGTVIGDYLGERDELPLKVMHAYVDSFNFEKKDFVEAIRFFLRGFRLPGEAQKIDRIMEKFAEHYWKCNPGSFTSADTAYVLAYSVIMLNTDAHNNMVKDKMTKADFVRNNRGIDDGKDLPEEYLGSLYDRVVKEEIRMNSDTLAPQNKQVNGLNKLLGLDGILNLVSWMQPDEKPHGANGRLIRDIQEQFQAKPEKSESVYHTVTDISILRFILEVSWGPMLAAFSVTIDQSDDRLATSLCLQGFRYAVHVTAVMGMQTQRDAFVTSMAKFTNLHCAADMKQKNVDAVKAIITIAIEDGNHLHGSWEHILTCLSRIEHLQLLGEVSPSEKRYVPTKKAEVDDKKALGFPNLKKRGSFQNPSVMAVVRGGSYDSTSLVKSVPKLVTPEQIKSFIANLNLLDQIGNFELNHVYANSQRLNSEAIVSFVKALCKVSMSELQSPTDPRVFSLTKLVETAHYNMNRIRLVWSRIWNVLSDFFVSVGLSENLSVAIFVMDSLRQLSMKFLEREELANYHFQHEFLRPFVVVMQKSSSAEIRELIVRCVSQMVLSRVSNVKSGWKNVFTVFTTAALDERKNIVLLAFETIEKIVRDHFHCIIETEITVYADCIRCLITFTNSKFEGDIGFNTIEFLRFCALKLEEGGLVLNEKLKNNTISALKEDFSDTQSFTDLDEQVSYWIPLLTGLCKQVSDPRPAIRKRSIEVLFHILMDHGHLFTRPFWTGIFSSIILPVFNNIRSKTDMLFEESVDSPSSASLDTEETTWDVETSTLALQLLVDLLVKFFRSVRSQLPSVVSIIVGFIKSPFQGSTGSGISVLLHLADGLARSASEDEWREIFLALKEAASLTFAGFMKVLRTMDDIEDVETLSGQSVNIGDLDDDSLHIMSYVVSRTKKHIDVLSQIVEVVSDLYRRNQFSLSASHVDILADIFSCIASHAQQLNTDTVLRRKFKRACSVQNLTEPQLLNFENEAYKSYMMFLQDMVTCNPNVSKELDLESRLVTECAKIVKIYLKCTDPQQQEQQQRKPVLWVLPMESDRVEEATARTSLLVSSLEALCSLEAESLKKHVSSFFPLLVDLVRTEHCSPQVPYVLSNVLKSCIGPILA</sequence>
<name>BIG4_ARATH</name>
<evidence type="ECO:0000250" key="1"/>
<evidence type="ECO:0000255" key="2"/>
<evidence type="ECO:0000255" key="3">
    <source>
        <dbReference type="PROSITE-ProRule" id="PRU00189"/>
    </source>
</evidence>
<evidence type="ECO:0000305" key="4"/>
<protein>
    <recommendedName>
        <fullName>Brefeldin A-inhibited guanine nucleotide-exchange protein 4</fullName>
        <shortName>BIG4</shortName>
    </recommendedName>
    <alternativeName>
        <fullName>ARF guanine-nucleotide exchange factor BIG4</fullName>
    </alternativeName>
</protein>
<keyword id="KW-0963">Cytoplasm</keyword>
<keyword id="KW-0344">Guanine-nucleotide releasing factor</keyword>
<keyword id="KW-0472">Membrane</keyword>
<keyword id="KW-0653">Protein transport</keyword>
<keyword id="KW-1185">Reference proteome</keyword>
<keyword id="KW-0813">Transport</keyword>
<feature type="chain" id="PRO_0000420953" description="Brefeldin A-inhibited guanine nucleotide-exchange protein 4">
    <location>
        <begin position="1"/>
        <end position="1706"/>
    </location>
</feature>
<feature type="domain" description="SEC7" evidence="3">
    <location>
        <begin position="555"/>
        <end position="742"/>
    </location>
</feature>
<feature type="active site" evidence="2">
    <location>
        <position position="657"/>
    </location>
</feature>
<reference key="1">
    <citation type="journal article" date="1999" name="Nature">
        <title>Sequence and analysis of chromosome 4 of the plant Arabidopsis thaliana.</title>
        <authorList>
            <person name="Mayer K.F.X."/>
            <person name="Schueller C."/>
            <person name="Wambutt R."/>
            <person name="Murphy G."/>
            <person name="Volckaert G."/>
            <person name="Pohl T."/>
            <person name="Duesterhoeft A."/>
            <person name="Stiekema W."/>
            <person name="Entian K.-D."/>
            <person name="Terryn N."/>
            <person name="Harris B."/>
            <person name="Ansorge W."/>
            <person name="Brandt P."/>
            <person name="Grivell L.A."/>
            <person name="Rieger M."/>
            <person name="Weichselgartner M."/>
            <person name="de Simone V."/>
            <person name="Obermaier B."/>
            <person name="Mache R."/>
            <person name="Mueller M."/>
            <person name="Kreis M."/>
            <person name="Delseny M."/>
            <person name="Puigdomenech P."/>
            <person name="Watson M."/>
            <person name="Schmidtheini T."/>
            <person name="Reichert B."/>
            <person name="Portetelle D."/>
            <person name="Perez-Alonso M."/>
            <person name="Boutry M."/>
            <person name="Bancroft I."/>
            <person name="Vos P."/>
            <person name="Hoheisel J."/>
            <person name="Zimmermann W."/>
            <person name="Wedler H."/>
            <person name="Ridley P."/>
            <person name="Langham S.-A."/>
            <person name="McCullagh B."/>
            <person name="Bilham L."/>
            <person name="Robben J."/>
            <person name="van der Schueren J."/>
            <person name="Grymonprez B."/>
            <person name="Chuang Y.-J."/>
            <person name="Vandenbussche F."/>
            <person name="Braeken M."/>
            <person name="Weltjens I."/>
            <person name="Voet M."/>
            <person name="Bastiaens I."/>
            <person name="Aert R."/>
            <person name="Defoor E."/>
            <person name="Weitzenegger T."/>
            <person name="Bothe G."/>
            <person name="Ramsperger U."/>
            <person name="Hilbert H."/>
            <person name="Braun M."/>
            <person name="Holzer E."/>
            <person name="Brandt A."/>
            <person name="Peters S."/>
            <person name="van Staveren M."/>
            <person name="Dirkse W."/>
            <person name="Mooijman P."/>
            <person name="Klein Lankhorst R."/>
            <person name="Rose M."/>
            <person name="Hauf J."/>
            <person name="Koetter P."/>
            <person name="Berneiser S."/>
            <person name="Hempel S."/>
            <person name="Feldpausch M."/>
            <person name="Lamberth S."/>
            <person name="Van den Daele H."/>
            <person name="De Keyser A."/>
            <person name="Buysshaert C."/>
            <person name="Gielen J."/>
            <person name="Villarroel R."/>
            <person name="De Clercq R."/>
            <person name="van Montagu M."/>
            <person name="Rogers J."/>
            <person name="Cronin A."/>
            <person name="Quail M.A."/>
            <person name="Bray-Allen S."/>
            <person name="Clark L."/>
            <person name="Doggett J."/>
            <person name="Hall S."/>
            <person name="Kay M."/>
            <person name="Lennard N."/>
            <person name="McLay K."/>
            <person name="Mayes R."/>
            <person name="Pettett A."/>
            <person name="Rajandream M.A."/>
            <person name="Lyne M."/>
            <person name="Benes V."/>
            <person name="Rechmann S."/>
            <person name="Borkova D."/>
            <person name="Bloecker H."/>
            <person name="Scharfe M."/>
            <person name="Grimm M."/>
            <person name="Loehnert T.-H."/>
            <person name="Dose S."/>
            <person name="de Haan M."/>
            <person name="Maarse A.C."/>
            <person name="Schaefer M."/>
            <person name="Mueller-Auer S."/>
            <person name="Gabel C."/>
            <person name="Fuchs M."/>
            <person name="Fartmann B."/>
            <person name="Granderath K."/>
            <person name="Dauner D."/>
            <person name="Herzl A."/>
            <person name="Neumann S."/>
            <person name="Argiriou A."/>
            <person name="Vitale D."/>
            <person name="Liguori R."/>
            <person name="Piravandi E."/>
            <person name="Massenet O."/>
            <person name="Quigley F."/>
            <person name="Clabauld G."/>
            <person name="Muendlein A."/>
            <person name="Felber R."/>
            <person name="Schnabl S."/>
            <person name="Hiller R."/>
            <person name="Schmidt W."/>
            <person name="Lecharny A."/>
            <person name="Aubourg S."/>
            <person name="Chefdor F."/>
            <person name="Cooke R."/>
            <person name="Berger C."/>
            <person name="Monfort A."/>
            <person name="Casacuberta E."/>
            <person name="Gibbons T."/>
            <person name="Weber N."/>
            <person name="Vandenbol M."/>
            <person name="Bargues M."/>
            <person name="Terol J."/>
            <person name="Torres A."/>
            <person name="Perez-Perez A."/>
            <person name="Purnelle B."/>
            <person name="Bent E."/>
            <person name="Johnson S."/>
            <person name="Tacon D."/>
            <person name="Jesse T."/>
            <person name="Heijnen L."/>
            <person name="Schwarz S."/>
            <person name="Scholler P."/>
            <person name="Heber S."/>
            <person name="Francs P."/>
            <person name="Bielke C."/>
            <person name="Frishman D."/>
            <person name="Haase D."/>
            <person name="Lemcke K."/>
            <person name="Mewes H.-W."/>
            <person name="Stocker S."/>
            <person name="Zaccaria P."/>
            <person name="Bevan M."/>
            <person name="Wilson R.K."/>
            <person name="de la Bastide M."/>
            <person name="Habermann K."/>
            <person name="Parnell L."/>
            <person name="Dedhia N."/>
            <person name="Gnoj L."/>
            <person name="Schutz K."/>
            <person name="Huang E."/>
            <person name="Spiegel L."/>
            <person name="Sekhon M."/>
            <person name="Murray J."/>
            <person name="Sheet P."/>
            <person name="Cordes M."/>
            <person name="Abu-Threideh J."/>
            <person name="Stoneking T."/>
            <person name="Kalicki J."/>
            <person name="Graves T."/>
            <person name="Harmon G."/>
            <person name="Edwards J."/>
            <person name="Latreille P."/>
            <person name="Courtney L."/>
            <person name="Cloud J."/>
            <person name="Abbott A."/>
            <person name="Scott K."/>
            <person name="Johnson D."/>
            <person name="Minx P."/>
            <person name="Bentley D."/>
            <person name="Fulton B."/>
            <person name="Miller N."/>
            <person name="Greco T."/>
            <person name="Kemp K."/>
            <person name="Kramer J."/>
            <person name="Fulton L."/>
            <person name="Mardis E."/>
            <person name="Dante M."/>
            <person name="Pepin K."/>
            <person name="Hillier L.W."/>
            <person name="Nelson J."/>
            <person name="Spieth J."/>
            <person name="Ryan E."/>
            <person name="Andrews S."/>
            <person name="Geisel C."/>
            <person name="Layman D."/>
            <person name="Du H."/>
            <person name="Ali J."/>
            <person name="Berghoff A."/>
            <person name="Jones K."/>
            <person name="Drone K."/>
            <person name="Cotton M."/>
            <person name="Joshu C."/>
            <person name="Antonoiu B."/>
            <person name="Zidanic M."/>
            <person name="Strong C."/>
            <person name="Sun H."/>
            <person name="Lamar B."/>
            <person name="Yordan C."/>
            <person name="Ma P."/>
            <person name="Zhong J."/>
            <person name="Preston R."/>
            <person name="Vil D."/>
            <person name="Shekher M."/>
            <person name="Matero A."/>
            <person name="Shah R."/>
            <person name="Swaby I.K."/>
            <person name="O'Shaughnessy A."/>
            <person name="Rodriguez M."/>
            <person name="Hoffman J."/>
            <person name="Till S."/>
            <person name="Granat S."/>
            <person name="Shohdy N."/>
            <person name="Hasegawa A."/>
            <person name="Hameed A."/>
            <person name="Lodhi M."/>
            <person name="Johnson A."/>
            <person name="Chen E."/>
            <person name="Marra M.A."/>
            <person name="Martienssen R."/>
            <person name="McCombie W.R."/>
        </authorList>
    </citation>
    <scope>NUCLEOTIDE SEQUENCE [LARGE SCALE GENOMIC DNA]</scope>
    <source>
        <strain>cv. Columbia</strain>
    </source>
</reference>
<reference key="2">
    <citation type="journal article" date="2017" name="Plant J.">
        <title>Araport11: a complete reannotation of the Arabidopsis thaliana reference genome.</title>
        <authorList>
            <person name="Cheng C.Y."/>
            <person name="Krishnakumar V."/>
            <person name="Chan A.P."/>
            <person name="Thibaud-Nissen F."/>
            <person name="Schobel S."/>
            <person name="Town C.D."/>
        </authorList>
    </citation>
    <scope>GENOME REANNOTATION</scope>
    <source>
        <strain>cv. Columbia</strain>
    </source>
</reference>
<reference key="3">
    <citation type="journal article" date="2003" name="Cell">
        <title>The Arabidopsis GNOM ARF-GEF mediates endosomal recycling, auxin transport, and auxin-dependent plant growth.</title>
        <authorList>
            <person name="Geldner N."/>
            <person name="Anders N."/>
            <person name="Wolters H."/>
            <person name="Keicher J."/>
            <person name="Kornberger W."/>
            <person name="Muller P."/>
            <person name="Delbarre A."/>
            <person name="Ueda T."/>
            <person name="Nakano A."/>
            <person name="Juergens G."/>
        </authorList>
    </citation>
    <scope>GENE FAMILY</scope>
</reference>
<reference key="4">
    <citation type="journal article" date="2004" name="Mol. Biol. Cell">
        <title>Phylogenetic analysis of Sec7-domain-containing Arf nucleotide exchangers.</title>
        <authorList>
            <person name="Cox R."/>
            <person name="Mason-Gamer R.J."/>
            <person name="Jackson C.L."/>
            <person name="Segev N."/>
        </authorList>
    </citation>
    <scope>GENE FAMILY</scope>
    <scope>NOMENCLATURE</scope>
</reference>
<reference key="5">
    <citation type="journal article" date="2007" name="Nature">
        <title>Functional diversification of closely related ARF-GEFs in protein secretion and recycling.</title>
        <authorList>
            <person name="Richter S."/>
            <person name="Geldner N."/>
            <person name="Schrader J."/>
            <person name="Wolters H."/>
            <person name="Stierhof Y.D."/>
            <person name="Rios G."/>
            <person name="Koncz C."/>
            <person name="Robinson D.G."/>
            <person name="Juergens G."/>
        </authorList>
    </citation>
    <scope>GENE FAMILY</scope>
</reference>
<proteinExistence type="inferred from homology"/>